<reference key="1">
    <citation type="journal article" date="2006" name="J. Bacteriol.">
        <title>Whole-genome sequence of Listeria welshimeri reveals common steps in genome reduction with Listeria innocua as compared to Listeria monocytogenes.</title>
        <authorList>
            <person name="Hain T."/>
            <person name="Steinweg C."/>
            <person name="Kuenne C.T."/>
            <person name="Billion A."/>
            <person name="Ghai R."/>
            <person name="Chatterjee S.S."/>
            <person name="Domann E."/>
            <person name="Kaerst U."/>
            <person name="Goesmann A."/>
            <person name="Bekel T."/>
            <person name="Bartels D."/>
            <person name="Kaiser O."/>
            <person name="Meyer F."/>
            <person name="Puehler A."/>
            <person name="Weisshaar B."/>
            <person name="Wehland J."/>
            <person name="Liang C."/>
            <person name="Dandekar T."/>
            <person name="Lampidis R."/>
            <person name="Kreft J."/>
            <person name="Goebel W."/>
            <person name="Chakraborty T."/>
        </authorList>
    </citation>
    <scope>NUCLEOTIDE SEQUENCE [LARGE SCALE GENOMIC DNA]</scope>
    <source>
        <strain>ATCC 35897 / DSM 20650 / CCUG 15529 / CIP 8149 / NCTC 11857 / SLCC 5334 / V8</strain>
    </source>
</reference>
<feature type="chain" id="PRO_1000048476" description="DNA polymerase III PolC-type">
    <location>
        <begin position="1"/>
        <end position="1444"/>
    </location>
</feature>
<feature type="domain" description="Exonuclease">
    <location>
        <begin position="428"/>
        <end position="584"/>
    </location>
</feature>
<feature type="region of interest" description="Disordered" evidence="2">
    <location>
        <begin position="196"/>
        <end position="218"/>
    </location>
</feature>
<feature type="compositionally biased region" description="Polar residues" evidence="2">
    <location>
        <begin position="207"/>
        <end position="216"/>
    </location>
</feature>
<keyword id="KW-0963">Cytoplasm</keyword>
<keyword id="KW-0235">DNA replication</keyword>
<keyword id="KW-0239">DNA-directed DNA polymerase</keyword>
<keyword id="KW-0269">Exonuclease</keyword>
<keyword id="KW-0378">Hydrolase</keyword>
<keyword id="KW-0540">Nuclease</keyword>
<keyword id="KW-0548">Nucleotidyltransferase</keyword>
<keyword id="KW-0808">Transferase</keyword>
<proteinExistence type="inferred from homology"/>
<dbReference type="EC" id="2.7.7.7" evidence="1"/>
<dbReference type="EMBL" id="AM263198">
    <property type="protein sequence ID" value="CAK20753.1"/>
    <property type="molecule type" value="Genomic_DNA"/>
</dbReference>
<dbReference type="RefSeq" id="WP_011702138.1">
    <property type="nucleotide sequence ID" value="NC_008555.1"/>
</dbReference>
<dbReference type="SMR" id="A0AIC1"/>
<dbReference type="STRING" id="386043.lwe1335"/>
<dbReference type="GeneID" id="61189212"/>
<dbReference type="KEGG" id="lwe:lwe1335"/>
<dbReference type="eggNOG" id="COG2176">
    <property type="taxonomic scope" value="Bacteria"/>
</dbReference>
<dbReference type="HOGENOM" id="CLU_003297_0_0_9"/>
<dbReference type="OrthoDB" id="9804290at2"/>
<dbReference type="Proteomes" id="UP000000779">
    <property type="component" value="Chromosome"/>
</dbReference>
<dbReference type="GO" id="GO:0005737">
    <property type="term" value="C:cytoplasm"/>
    <property type="evidence" value="ECO:0007669"/>
    <property type="project" value="UniProtKB-SubCell"/>
</dbReference>
<dbReference type="GO" id="GO:0008408">
    <property type="term" value="F:3'-5' exonuclease activity"/>
    <property type="evidence" value="ECO:0007669"/>
    <property type="project" value="UniProtKB-UniRule"/>
</dbReference>
<dbReference type="GO" id="GO:0003677">
    <property type="term" value="F:DNA binding"/>
    <property type="evidence" value="ECO:0007669"/>
    <property type="project" value="UniProtKB-UniRule"/>
</dbReference>
<dbReference type="GO" id="GO:0003887">
    <property type="term" value="F:DNA-directed DNA polymerase activity"/>
    <property type="evidence" value="ECO:0007669"/>
    <property type="project" value="UniProtKB-UniRule"/>
</dbReference>
<dbReference type="GO" id="GO:0006261">
    <property type="term" value="P:DNA-templated DNA replication"/>
    <property type="evidence" value="ECO:0007669"/>
    <property type="project" value="UniProtKB-UniRule"/>
</dbReference>
<dbReference type="CDD" id="cd06127">
    <property type="entry name" value="DEDDh"/>
    <property type="match status" value="1"/>
</dbReference>
<dbReference type="CDD" id="cd07435">
    <property type="entry name" value="PHP_PolIIIA_POLC"/>
    <property type="match status" value="1"/>
</dbReference>
<dbReference type="CDD" id="cd04484">
    <property type="entry name" value="polC_OBF"/>
    <property type="match status" value="1"/>
</dbReference>
<dbReference type="FunFam" id="3.30.420.10:FF:000045">
    <property type="entry name" value="3'-5' exonuclease DinG"/>
    <property type="match status" value="1"/>
</dbReference>
<dbReference type="Gene3D" id="1.10.150.870">
    <property type="match status" value="1"/>
</dbReference>
<dbReference type="Gene3D" id="3.30.1900.20">
    <property type="match status" value="2"/>
</dbReference>
<dbReference type="Gene3D" id="6.10.140.1510">
    <property type="match status" value="1"/>
</dbReference>
<dbReference type="Gene3D" id="3.20.20.140">
    <property type="entry name" value="Metal-dependent hydrolases"/>
    <property type="match status" value="2"/>
</dbReference>
<dbReference type="Gene3D" id="2.40.50.140">
    <property type="entry name" value="Nucleic acid-binding proteins"/>
    <property type="match status" value="1"/>
</dbReference>
<dbReference type="Gene3D" id="1.10.150.700">
    <property type="entry name" value="PolC, middle finger domain"/>
    <property type="match status" value="1"/>
</dbReference>
<dbReference type="Gene3D" id="3.30.420.10">
    <property type="entry name" value="Ribonuclease H-like superfamily/Ribonuclease H"/>
    <property type="match status" value="1"/>
</dbReference>
<dbReference type="HAMAP" id="MF_00356">
    <property type="entry name" value="DNApol_PolC"/>
    <property type="match status" value="1"/>
</dbReference>
<dbReference type="InterPro" id="IPR011708">
    <property type="entry name" value="DNA_pol3_alpha_NTPase_dom"/>
</dbReference>
<dbReference type="InterPro" id="IPR040982">
    <property type="entry name" value="DNA_pol3_finger"/>
</dbReference>
<dbReference type="InterPro" id="IPR024754">
    <property type="entry name" value="DNA_PolC-like_N_II"/>
</dbReference>
<dbReference type="InterPro" id="IPR028112">
    <property type="entry name" value="DNA_PolC-type_N_I"/>
</dbReference>
<dbReference type="InterPro" id="IPR004805">
    <property type="entry name" value="DnaE2/DnaE/PolC"/>
</dbReference>
<dbReference type="InterPro" id="IPR029460">
    <property type="entry name" value="DNAPol_HHH"/>
</dbReference>
<dbReference type="InterPro" id="IPR006054">
    <property type="entry name" value="DnaQ"/>
</dbReference>
<dbReference type="InterPro" id="IPR013520">
    <property type="entry name" value="Exonuclease_RNaseT/DNA_pol3"/>
</dbReference>
<dbReference type="InterPro" id="IPR012340">
    <property type="entry name" value="NA-bd_OB-fold"/>
</dbReference>
<dbReference type="InterPro" id="IPR004365">
    <property type="entry name" value="NA-bd_OB_tRNA"/>
</dbReference>
<dbReference type="InterPro" id="IPR004013">
    <property type="entry name" value="PHP_dom"/>
</dbReference>
<dbReference type="InterPro" id="IPR003141">
    <property type="entry name" value="Pol/His_phosphatase_N"/>
</dbReference>
<dbReference type="InterPro" id="IPR006308">
    <property type="entry name" value="Pol_III_a_PolC-type_gram_pos"/>
</dbReference>
<dbReference type="InterPro" id="IPR044923">
    <property type="entry name" value="PolC_middle_finger_sf"/>
</dbReference>
<dbReference type="InterPro" id="IPR012337">
    <property type="entry name" value="RNaseH-like_sf"/>
</dbReference>
<dbReference type="InterPro" id="IPR036397">
    <property type="entry name" value="RNaseH_sf"/>
</dbReference>
<dbReference type="NCBIfam" id="TIGR00573">
    <property type="entry name" value="dnaq"/>
    <property type="match status" value="1"/>
</dbReference>
<dbReference type="NCBIfam" id="TIGR01405">
    <property type="entry name" value="polC_Gram_pos"/>
    <property type="match status" value="1"/>
</dbReference>
<dbReference type="NCBIfam" id="NF001688">
    <property type="entry name" value="PRK00448.1"/>
    <property type="match status" value="1"/>
</dbReference>
<dbReference type="PANTHER" id="PTHR32294:SF5">
    <property type="entry name" value="DNA POLYMERASE III POLC-TYPE"/>
    <property type="match status" value="1"/>
</dbReference>
<dbReference type="PANTHER" id="PTHR32294">
    <property type="entry name" value="DNA POLYMERASE III SUBUNIT ALPHA"/>
    <property type="match status" value="1"/>
</dbReference>
<dbReference type="Pfam" id="PF14480">
    <property type="entry name" value="DNA_pol3_a_NI"/>
    <property type="match status" value="1"/>
</dbReference>
<dbReference type="Pfam" id="PF11490">
    <property type="entry name" value="DNA_pol3_a_NII"/>
    <property type="match status" value="1"/>
</dbReference>
<dbReference type="Pfam" id="PF07733">
    <property type="entry name" value="DNA_pol3_alpha"/>
    <property type="match status" value="2"/>
</dbReference>
<dbReference type="Pfam" id="PF17657">
    <property type="entry name" value="DNA_pol3_finger"/>
    <property type="match status" value="1"/>
</dbReference>
<dbReference type="Pfam" id="PF14579">
    <property type="entry name" value="HHH_6"/>
    <property type="match status" value="1"/>
</dbReference>
<dbReference type="Pfam" id="PF02811">
    <property type="entry name" value="PHP"/>
    <property type="match status" value="1"/>
</dbReference>
<dbReference type="Pfam" id="PF00929">
    <property type="entry name" value="RNase_T"/>
    <property type="match status" value="1"/>
</dbReference>
<dbReference type="Pfam" id="PF01336">
    <property type="entry name" value="tRNA_anti-codon"/>
    <property type="match status" value="1"/>
</dbReference>
<dbReference type="SMART" id="SM00479">
    <property type="entry name" value="EXOIII"/>
    <property type="match status" value="1"/>
</dbReference>
<dbReference type="SMART" id="SM00481">
    <property type="entry name" value="POLIIIAc"/>
    <property type="match status" value="1"/>
</dbReference>
<dbReference type="SUPFAM" id="SSF50249">
    <property type="entry name" value="Nucleic acid-binding proteins"/>
    <property type="match status" value="1"/>
</dbReference>
<dbReference type="SUPFAM" id="SSF53098">
    <property type="entry name" value="Ribonuclease H-like"/>
    <property type="match status" value="1"/>
</dbReference>
<sequence length="1444" mass="162974">MTAKEEEKQERFQLLMTQIGLQDVTTYEEFTKDAKIEKLIADKKNKTWQFHLHVPQIFPAPLFHMMDVGMKRAFSQIAETEMQIVPENQTINETLIQEYWNLIVEPIGKQSPMIGKLLMEQKPTFKEPHFIEVAVHNDMEEATIQQRFQAKIIENYGKAGFPRLAMKMHMLDQSESDEYKAFAQAKQEEDQKKAAEAVQVMQKRQAEGQNGNSSAAPLSGPFQIGYKIKDDEEIKRLGDVYDEERRITVQGLIFATEIRELRSGRSLLQFKITDYTSSMIIKMFSRDNEDAAMFQNLKKGMWVKVRGSVQNDTFVRDLIMMAQDINEIAGVKRLDTAEEKRAELHLHSPMSQMDATSSVDSLFKQAADWGHKAIAITDHSVAQSFPEAYGAGQKYGLKVIFGIEANLIDDGVPIAYNDQHIGLQDATYCVFDVETTGLSAVYDTIIELAGVKMKNGEIIDKFEAFIDPGHPLSATTINLTGITDDMVKGSDPIDVVLKRFKEWSGDDILVAHNASFDMGFINTAYEKVGLEKADNAVVDTLELARFLYPHFKNHRLNTLTKKFNIILEQHHRAVFDAEATAYLAWKLIKDAKEMHDINFHDSLNDYMGEGDAYKRARPFHATIYAQTDVGLKNLFKLITMSNINYFYRVPRIPRSQLKKLREGLIVGTACSQGELFEAMMQKGMQAAEKVVEFYDFIEIQPKPVYAPLIERELVRDEKALEEILKNIVRVGEKAGKPVVATGNVHYKDPVDKIYRKILIHSQGGANPLNRAELPDVHFRSTDEMLKEFAFLGEEKAKEVVVTNSNLVVDWMEELKPIKDELYTPKIDGAEDEVRNMSYDMAHQLYGENLPEIVEARLEKELKSIIGHGFAVIYLISHKLVKKSLVDGYLVGSRGSVGSSFVATMTEITEVNPLPPHYLCPNCKDSEFFDDGSVGSGFDLPDKECPHCGTAYQKEGQDIPFETFLGFKGDKVPDIDLNFSGDYQPVAHAYTKEIFGEDYVFRAGTIGTVAEKTAFGYVRNYERDMNMTIRGAEIDRLVAGCTGVKRTTGQHPGGIIVIPDYMDVYDFTPVQFPADATDSEWKTTHFDFHSIHDNVLKLDILGHDDPTAIRMLQDLSGIDPKTIPTDDPDVMKLFGSTESLGVKPADIDSKTGTLGIPEFGTRFVRQMLEQTKPTTFSELVQISGLSHGTDVWLGNAEELIKNKTCELPDVIGCRDDIMVFLIYQGLESSLAFKIMESVRKGKGLTEEMEEAMMANKVPLWYIESCKKIKYMFPKAHAAAYVLMAVRIAYFKVHYPLYFYATYFTVRADDFDLTSMVNGKEAVKATMKEVNDKGMEASTKEKNLLTVLEIANEMLARGFHFQKVDLYKSSADEFIIDGDSLIPPFNAIPSLGTNVAKQIVAARENGEFLSKEDLQQRGKVSKTIIQYMDDQGCLEGLPDQNQLSLF</sequence>
<comment type="function">
    <text evidence="1">Required for replicative DNA synthesis. This DNA polymerase also exhibits 3' to 5' exonuclease activity.</text>
</comment>
<comment type="catalytic activity">
    <reaction evidence="1">
        <text>DNA(n) + a 2'-deoxyribonucleoside 5'-triphosphate = DNA(n+1) + diphosphate</text>
        <dbReference type="Rhea" id="RHEA:22508"/>
        <dbReference type="Rhea" id="RHEA-COMP:17339"/>
        <dbReference type="Rhea" id="RHEA-COMP:17340"/>
        <dbReference type="ChEBI" id="CHEBI:33019"/>
        <dbReference type="ChEBI" id="CHEBI:61560"/>
        <dbReference type="ChEBI" id="CHEBI:173112"/>
        <dbReference type="EC" id="2.7.7.7"/>
    </reaction>
</comment>
<comment type="subcellular location">
    <subcellularLocation>
        <location evidence="1">Cytoplasm</location>
    </subcellularLocation>
</comment>
<comment type="similarity">
    <text evidence="1">Belongs to the DNA polymerase type-C family. PolC subfamily.</text>
</comment>
<name>DPO3_LISW6</name>
<gene>
    <name evidence="1" type="primary">polC</name>
    <name type="ordered locus">lwe1335</name>
</gene>
<accession>A0AIC1</accession>
<protein>
    <recommendedName>
        <fullName evidence="1">DNA polymerase III PolC-type</fullName>
        <shortName evidence="1">PolIII</shortName>
        <ecNumber evidence="1">2.7.7.7</ecNumber>
    </recommendedName>
</protein>
<organism>
    <name type="scientific">Listeria welshimeri serovar 6b (strain ATCC 35897 / DSM 20650 / CCUG 15529 / CIP 8149 / NCTC 11857 / SLCC 5334 / V8)</name>
    <dbReference type="NCBI Taxonomy" id="386043"/>
    <lineage>
        <taxon>Bacteria</taxon>
        <taxon>Bacillati</taxon>
        <taxon>Bacillota</taxon>
        <taxon>Bacilli</taxon>
        <taxon>Bacillales</taxon>
        <taxon>Listeriaceae</taxon>
        <taxon>Listeria</taxon>
    </lineage>
</organism>
<evidence type="ECO:0000255" key="1">
    <source>
        <dbReference type="HAMAP-Rule" id="MF_00356"/>
    </source>
</evidence>
<evidence type="ECO:0000256" key="2">
    <source>
        <dbReference type="SAM" id="MobiDB-lite"/>
    </source>
</evidence>